<feature type="chain" id="PRO_0000131579" description="Small ribosomal subunit protein uS5">
    <location>
        <begin position="1"/>
        <end position="189"/>
    </location>
</feature>
<feature type="domain" description="S5 DRBM" evidence="1">
    <location>
        <begin position="22"/>
        <end position="85"/>
    </location>
</feature>
<accession>Q92QF3</accession>
<protein>
    <recommendedName>
        <fullName evidence="1">Small ribosomal subunit protein uS5</fullName>
    </recommendedName>
    <alternativeName>
        <fullName evidence="2">30S ribosomal protein S5</fullName>
    </alternativeName>
</protein>
<sequence length="189" mass="20575">MAQERRGSREDRQNREERDSEFVDKLVAINRVAKVVKGGRRFGFAALVVVGDQKGRVGFGHGKAREVPEAIRKATEAAKRDLIFVPLRGGRTLHHDVHGRHGAGKVLLRSAKPGTGIIAGGPMRAVFETLGVHDVVAKSTGSSNPYNMVRATFDALKNQMHPKDIAAQRGMKYATLQSRRVSAGVASEE</sequence>
<evidence type="ECO:0000255" key="1">
    <source>
        <dbReference type="HAMAP-Rule" id="MF_01307"/>
    </source>
</evidence>
<evidence type="ECO:0000305" key="2"/>
<keyword id="KW-1185">Reference proteome</keyword>
<keyword id="KW-0687">Ribonucleoprotein</keyword>
<keyword id="KW-0689">Ribosomal protein</keyword>
<keyword id="KW-0694">RNA-binding</keyword>
<keyword id="KW-0699">rRNA-binding</keyword>
<dbReference type="EMBL" id="AL591688">
    <property type="protein sequence ID" value="CAC45952.1"/>
    <property type="molecule type" value="Genomic_DNA"/>
</dbReference>
<dbReference type="RefSeq" id="NP_385479.1">
    <property type="nucleotide sequence ID" value="NC_003047.1"/>
</dbReference>
<dbReference type="RefSeq" id="WP_003536510.1">
    <property type="nucleotide sequence ID" value="NC_003047.1"/>
</dbReference>
<dbReference type="SMR" id="Q92QF3"/>
<dbReference type="EnsemblBacteria" id="CAC45952">
    <property type="protein sequence ID" value="CAC45952"/>
    <property type="gene ID" value="SMc01292"/>
</dbReference>
<dbReference type="GeneID" id="89575697"/>
<dbReference type="KEGG" id="sme:SMc01292"/>
<dbReference type="PATRIC" id="fig|266834.11.peg.2789"/>
<dbReference type="eggNOG" id="COG0098">
    <property type="taxonomic scope" value="Bacteria"/>
</dbReference>
<dbReference type="HOGENOM" id="CLU_065898_2_2_5"/>
<dbReference type="OrthoDB" id="9809045at2"/>
<dbReference type="Proteomes" id="UP000001976">
    <property type="component" value="Chromosome"/>
</dbReference>
<dbReference type="GO" id="GO:0015935">
    <property type="term" value="C:small ribosomal subunit"/>
    <property type="evidence" value="ECO:0007669"/>
    <property type="project" value="InterPro"/>
</dbReference>
<dbReference type="GO" id="GO:0019843">
    <property type="term" value="F:rRNA binding"/>
    <property type="evidence" value="ECO:0007669"/>
    <property type="project" value="UniProtKB-UniRule"/>
</dbReference>
<dbReference type="GO" id="GO:0003735">
    <property type="term" value="F:structural constituent of ribosome"/>
    <property type="evidence" value="ECO:0007669"/>
    <property type="project" value="InterPro"/>
</dbReference>
<dbReference type="GO" id="GO:0006412">
    <property type="term" value="P:translation"/>
    <property type="evidence" value="ECO:0007669"/>
    <property type="project" value="UniProtKB-UniRule"/>
</dbReference>
<dbReference type="FunFam" id="3.30.160.20:FF:000001">
    <property type="entry name" value="30S ribosomal protein S5"/>
    <property type="match status" value="1"/>
</dbReference>
<dbReference type="FunFam" id="3.30.230.10:FF:000002">
    <property type="entry name" value="30S ribosomal protein S5"/>
    <property type="match status" value="1"/>
</dbReference>
<dbReference type="Gene3D" id="3.30.160.20">
    <property type="match status" value="1"/>
</dbReference>
<dbReference type="Gene3D" id="3.30.230.10">
    <property type="match status" value="1"/>
</dbReference>
<dbReference type="HAMAP" id="MF_01307_B">
    <property type="entry name" value="Ribosomal_uS5_B"/>
    <property type="match status" value="1"/>
</dbReference>
<dbReference type="InterPro" id="IPR020568">
    <property type="entry name" value="Ribosomal_Su5_D2-typ_SF"/>
</dbReference>
<dbReference type="InterPro" id="IPR000851">
    <property type="entry name" value="Ribosomal_uS5"/>
</dbReference>
<dbReference type="InterPro" id="IPR005712">
    <property type="entry name" value="Ribosomal_uS5_bac-type"/>
</dbReference>
<dbReference type="InterPro" id="IPR005324">
    <property type="entry name" value="Ribosomal_uS5_C"/>
</dbReference>
<dbReference type="InterPro" id="IPR013810">
    <property type="entry name" value="Ribosomal_uS5_N"/>
</dbReference>
<dbReference type="InterPro" id="IPR018192">
    <property type="entry name" value="Ribosomal_uS5_N_CS"/>
</dbReference>
<dbReference type="InterPro" id="IPR014721">
    <property type="entry name" value="Ribsml_uS5_D2-typ_fold_subgr"/>
</dbReference>
<dbReference type="NCBIfam" id="TIGR01021">
    <property type="entry name" value="rpsE_bact"/>
    <property type="match status" value="1"/>
</dbReference>
<dbReference type="PANTHER" id="PTHR48277">
    <property type="entry name" value="MITOCHONDRIAL RIBOSOMAL PROTEIN S5"/>
    <property type="match status" value="1"/>
</dbReference>
<dbReference type="PANTHER" id="PTHR48277:SF1">
    <property type="entry name" value="MITOCHONDRIAL RIBOSOMAL PROTEIN S5"/>
    <property type="match status" value="1"/>
</dbReference>
<dbReference type="Pfam" id="PF00333">
    <property type="entry name" value="Ribosomal_S5"/>
    <property type="match status" value="1"/>
</dbReference>
<dbReference type="Pfam" id="PF03719">
    <property type="entry name" value="Ribosomal_S5_C"/>
    <property type="match status" value="1"/>
</dbReference>
<dbReference type="SUPFAM" id="SSF54768">
    <property type="entry name" value="dsRNA-binding domain-like"/>
    <property type="match status" value="1"/>
</dbReference>
<dbReference type="SUPFAM" id="SSF54211">
    <property type="entry name" value="Ribosomal protein S5 domain 2-like"/>
    <property type="match status" value="1"/>
</dbReference>
<dbReference type="PROSITE" id="PS00585">
    <property type="entry name" value="RIBOSOMAL_S5"/>
    <property type="match status" value="1"/>
</dbReference>
<dbReference type="PROSITE" id="PS50881">
    <property type="entry name" value="S5_DSRBD"/>
    <property type="match status" value="1"/>
</dbReference>
<organism>
    <name type="scientific">Rhizobium meliloti (strain 1021)</name>
    <name type="common">Ensifer meliloti</name>
    <name type="synonym">Sinorhizobium meliloti</name>
    <dbReference type="NCBI Taxonomy" id="266834"/>
    <lineage>
        <taxon>Bacteria</taxon>
        <taxon>Pseudomonadati</taxon>
        <taxon>Pseudomonadota</taxon>
        <taxon>Alphaproteobacteria</taxon>
        <taxon>Hyphomicrobiales</taxon>
        <taxon>Rhizobiaceae</taxon>
        <taxon>Sinorhizobium/Ensifer group</taxon>
        <taxon>Sinorhizobium</taxon>
    </lineage>
</organism>
<comment type="function">
    <text evidence="1">With S4 and S12 plays an important role in translational accuracy.</text>
</comment>
<comment type="function">
    <text evidence="1">Located at the back of the 30S subunit body where it stabilizes the conformation of the head with respect to the body.</text>
</comment>
<comment type="subunit">
    <text evidence="1">Part of the 30S ribosomal subunit. Contacts proteins S4 and S8.</text>
</comment>
<comment type="domain">
    <text>The N-terminal domain interacts with the head of the 30S subunit; the C-terminal domain interacts with the body and contacts protein S4. The interaction surface between S4 and S5 is involved in control of translational fidelity.</text>
</comment>
<comment type="similarity">
    <text evidence="1">Belongs to the universal ribosomal protein uS5 family.</text>
</comment>
<proteinExistence type="inferred from homology"/>
<name>RS5_RHIME</name>
<gene>
    <name evidence="1" type="primary">rpsE</name>
    <name type="ordered locus">R01373</name>
    <name type="ORF">SMc01292</name>
</gene>
<reference key="1">
    <citation type="journal article" date="2001" name="Proc. Natl. Acad. Sci. U.S.A.">
        <title>Analysis of the chromosome sequence of the legume symbiont Sinorhizobium meliloti strain 1021.</title>
        <authorList>
            <person name="Capela D."/>
            <person name="Barloy-Hubler F."/>
            <person name="Gouzy J."/>
            <person name="Bothe G."/>
            <person name="Ampe F."/>
            <person name="Batut J."/>
            <person name="Boistard P."/>
            <person name="Becker A."/>
            <person name="Boutry M."/>
            <person name="Cadieu E."/>
            <person name="Dreano S."/>
            <person name="Gloux S."/>
            <person name="Godrie T."/>
            <person name="Goffeau A."/>
            <person name="Kahn D."/>
            <person name="Kiss E."/>
            <person name="Lelaure V."/>
            <person name="Masuy D."/>
            <person name="Pohl T."/>
            <person name="Portetelle D."/>
            <person name="Puehler A."/>
            <person name="Purnelle B."/>
            <person name="Ramsperger U."/>
            <person name="Renard C."/>
            <person name="Thebault P."/>
            <person name="Vandenbol M."/>
            <person name="Weidner S."/>
            <person name="Galibert F."/>
        </authorList>
    </citation>
    <scope>NUCLEOTIDE SEQUENCE [LARGE SCALE GENOMIC DNA]</scope>
    <source>
        <strain>1021</strain>
    </source>
</reference>
<reference key="2">
    <citation type="journal article" date="2001" name="Science">
        <title>The composite genome of the legume symbiont Sinorhizobium meliloti.</title>
        <authorList>
            <person name="Galibert F."/>
            <person name="Finan T.M."/>
            <person name="Long S.R."/>
            <person name="Puehler A."/>
            <person name="Abola P."/>
            <person name="Ampe F."/>
            <person name="Barloy-Hubler F."/>
            <person name="Barnett M.J."/>
            <person name="Becker A."/>
            <person name="Boistard P."/>
            <person name="Bothe G."/>
            <person name="Boutry M."/>
            <person name="Bowser L."/>
            <person name="Buhrmester J."/>
            <person name="Cadieu E."/>
            <person name="Capela D."/>
            <person name="Chain P."/>
            <person name="Cowie A."/>
            <person name="Davis R.W."/>
            <person name="Dreano S."/>
            <person name="Federspiel N.A."/>
            <person name="Fisher R.F."/>
            <person name="Gloux S."/>
            <person name="Godrie T."/>
            <person name="Goffeau A."/>
            <person name="Golding B."/>
            <person name="Gouzy J."/>
            <person name="Gurjal M."/>
            <person name="Hernandez-Lucas I."/>
            <person name="Hong A."/>
            <person name="Huizar L."/>
            <person name="Hyman R.W."/>
            <person name="Jones T."/>
            <person name="Kahn D."/>
            <person name="Kahn M.L."/>
            <person name="Kalman S."/>
            <person name="Keating D.H."/>
            <person name="Kiss E."/>
            <person name="Komp C."/>
            <person name="Lelaure V."/>
            <person name="Masuy D."/>
            <person name="Palm C."/>
            <person name="Peck M.C."/>
            <person name="Pohl T.M."/>
            <person name="Portetelle D."/>
            <person name="Purnelle B."/>
            <person name="Ramsperger U."/>
            <person name="Surzycki R."/>
            <person name="Thebault P."/>
            <person name="Vandenbol M."/>
            <person name="Vorhoelter F.J."/>
            <person name="Weidner S."/>
            <person name="Wells D.H."/>
            <person name="Wong K."/>
            <person name="Yeh K.-C."/>
            <person name="Batut J."/>
        </authorList>
    </citation>
    <scope>NUCLEOTIDE SEQUENCE [LARGE SCALE GENOMIC DNA]</scope>
    <source>
        <strain>1021</strain>
    </source>
</reference>